<sequence length="357" mass="38764">MAEAAPAIEAILAEYGELEQRLADPDLHADAGAARKVGRRFAQISPIVATYRKLEAARGDLEAARELAADDASFAAEVDELTDQIGDLDRALTDLLAPRDPHDADDIVLEVKSGEGGEESALFAADLARMYIRYAERHGWTVTMLGETTSDLGGYKDATLSIASKGDSADGVWARLKFEGGVHRVQRVPVTESQGRVHTSAAGVLVYPEPDEVEQVQIDESDLRVDVYRSSGKGGQGVNTTDSAVRITHLPTGIVVTCQNERSQLQNKARAMQVLAARLQALAEEQASADASADRASQIRTVDRSERIRTYNFPENRIADHRINFKAHNLDQVLDGDLDPLLDALAAADRQARLQNT</sequence>
<gene>
    <name evidence="1" type="primary">prfA</name>
    <name type="ordered locus">Mflv_2307</name>
</gene>
<feature type="chain" id="PRO_1000075504" description="Peptide chain release factor 1">
    <location>
        <begin position="1"/>
        <end position="357"/>
    </location>
</feature>
<feature type="modified residue" description="N5-methylglutamine" evidence="1">
    <location>
        <position position="236"/>
    </location>
</feature>
<keyword id="KW-0963">Cytoplasm</keyword>
<keyword id="KW-0488">Methylation</keyword>
<keyword id="KW-0648">Protein biosynthesis</keyword>
<dbReference type="EMBL" id="CP000656">
    <property type="protein sequence ID" value="ABP44785.1"/>
    <property type="molecule type" value="Genomic_DNA"/>
</dbReference>
<dbReference type="SMR" id="A4T8L3"/>
<dbReference type="STRING" id="350054.Mflv_2307"/>
<dbReference type="KEGG" id="mgi:Mflv_2307"/>
<dbReference type="eggNOG" id="COG0216">
    <property type="taxonomic scope" value="Bacteria"/>
</dbReference>
<dbReference type="HOGENOM" id="CLU_036856_0_1_11"/>
<dbReference type="OrthoDB" id="9806673at2"/>
<dbReference type="GO" id="GO:0005737">
    <property type="term" value="C:cytoplasm"/>
    <property type="evidence" value="ECO:0007669"/>
    <property type="project" value="UniProtKB-SubCell"/>
</dbReference>
<dbReference type="GO" id="GO:0016149">
    <property type="term" value="F:translation release factor activity, codon specific"/>
    <property type="evidence" value="ECO:0007669"/>
    <property type="project" value="UniProtKB-UniRule"/>
</dbReference>
<dbReference type="FunFam" id="3.30.160.20:FF:000004">
    <property type="entry name" value="Peptide chain release factor 1"/>
    <property type="match status" value="1"/>
</dbReference>
<dbReference type="Gene3D" id="3.30.160.20">
    <property type="match status" value="1"/>
</dbReference>
<dbReference type="Gene3D" id="3.30.70.1660">
    <property type="match status" value="1"/>
</dbReference>
<dbReference type="Gene3D" id="6.10.140.1950">
    <property type="match status" value="1"/>
</dbReference>
<dbReference type="HAMAP" id="MF_00093">
    <property type="entry name" value="Rel_fac_1"/>
    <property type="match status" value="1"/>
</dbReference>
<dbReference type="InterPro" id="IPR005139">
    <property type="entry name" value="PCRF"/>
</dbReference>
<dbReference type="InterPro" id="IPR000352">
    <property type="entry name" value="Pep_chain_release_fac_I"/>
</dbReference>
<dbReference type="InterPro" id="IPR045853">
    <property type="entry name" value="Pep_chain_release_fac_I_sf"/>
</dbReference>
<dbReference type="InterPro" id="IPR050057">
    <property type="entry name" value="Prokaryotic/Mito_RF"/>
</dbReference>
<dbReference type="InterPro" id="IPR004373">
    <property type="entry name" value="RF-1"/>
</dbReference>
<dbReference type="NCBIfam" id="TIGR00019">
    <property type="entry name" value="prfA"/>
    <property type="match status" value="1"/>
</dbReference>
<dbReference type="NCBIfam" id="NF001859">
    <property type="entry name" value="PRK00591.1"/>
    <property type="match status" value="1"/>
</dbReference>
<dbReference type="PANTHER" id="PTHR43804">
    <property type="entry name" value="LD18447P"/>
    <property type="match status" value="1"/>
</dbReference>
<dbReference type="PANTHER" id="PTHR43804:SF7">
    <property type="entry name" value="LD18447P"/>
    <property type="match status" value="1"/>
</dbReference>
<dbReference type="Pfam" id="PF03462">
    <property type="entry name" value="PCRF"/>
    <property type="match status" value="1"/>
</dbReference>
<dbReference type="Pfam" id="PF00472">
    <property type="entry name" value="RF-1"/>
    <property type="match status" value="1"/>
</dbReference>
<dbReference type="SMART" id="SM00937">
    <property type="entry name" value="PCRF"/>
    <property type="match status" value="1"/>
</dbReference>
<dbReference type="SUPFAM" id="SSF75620">
    <property type="entry name" value="Release factor"/>
    <property type="match status" value="1"/>
</dbReference>
<dbReference type="PROSITE" id="PS00745">
    <property type="entry name" value="RF_PROK_I"/>
    <property type="match status" value="1"/>
</dbReference>
<proteinExistence type="inferred from homology"/>
<accession>A4T8L3</accession>
<evidence type="ECO:0000255" key="1">
    <source>
        <dbReference type="HAMAP-Rule" id="MF_00093"/>
    </source>
</evidence>
<reference key="1">
    <citation type="submission" date="2007-04" db="EMBL/GenBank/DDBJ databases">
        <title>Complete sequence of chromosome of Mycobacterium gilvum PYR-GCK.</title>
        <authorList>
            <consortium name="US DOE Joint Genome Institute"/>
            <person name="Copeland A."/>
            <person name="Lucas S."/>
            <person name="Lapidus A."/>
            <person name="Barry K."/>
            <person name="Detter J.C."/>
            <person name="Glavina del Rio T."/>
            <person name="Hammon N."/>
            <person name="Israni S."/>
            <person name="Dalin E."/>
            <person name="Tice H."/>
            <person name="Pitluck S."/>
            <person name="Chain P."/>
            <person name="Malfatti S."/>
            <person name="Shin M."/>
            <person name="Vergez L."/>
            <person name="Schmutz J."/>
            <person name="Larimer F."/>
            <person name="Land M."/>
            <person name="Hauser L."/>
            <person name="Kyrpides N."/>
            <person name="Mikhailova N."/>
            <person name="Miller C."/>
            <person name="Richardson P."/>
        </authorList>
    </citation>
    <scope>NUCLEOTIDE SEQUENCE [LARGE SCALE GENOMIC DNA]</scope>
    <source>
        <strain>PYR-GCK</strain>
    </source>
</reference>
<comment type="function">
    <text evidence="1">Peptide chain release factor 1 directs the termination of translation in response to the peptide chain termination codons UAG and UAA.</text>
</comment>
<comment type="subcellular location">
    <subcellularLocation>
        <location evidence="1">Cytoplasm</location>
    </subcellularLocation>
</comment>
<comment type="PTM">
    <text evidence="1">Methylated by PrmC. Methylation increases the termination efficiency of RF1.</text>
</comment>
<comment type="similarity">
    <text evidence="1">Belongs to the prokaryotic/mitochondrial release factor family.</text>
</comment>
<name>RF1_MYCGI</name>
<organism>
    <name type="scientific">Mycolicibacterium gilvum (strain PYR-GCK)</name>
    <name type="common">Mycobacterium gilvum (strain PYR-GCK)</name>
    <dbReference type="NCBI Taxonomy" id="350054"/>
    <lineage>
        <taxon>Bacteria</taxon>
        <taxon>Bacillati</taxon>
        <taxon>Actinomycetota</taxon>
        <taxon>Actinomycetes</taxon>
        <taxon>Mycobacteriales</taxon>
        <taxon>Mycobacteriaceae</taxon>
        <taxon>Mycolicibacterium</taxon>
    </lineage>
</organism>
<protein>
    <recommendedName>
        <fullName evidence="1">Peptide chain release factor 1</fullName>
        <shortName evidence="1">RF-1</shortName>
    </recommendedName>
</protein>